<name>NUON_PARUW</name>
<feature type="chain" id="PRO_0000391207" description="NADH-quinone oxidoreductase subunit N">
    <location>
        <begin position="1"/>
        <end position="480"/>
    </location>
</feature>
<feature type="transmembrane region" description="Helical" evidence="1">
    <location>
        <begin position="10"/>
        <end position="30"/>
    </location>
</feature>
<feature type="transmembrane region" description="Helical" evidence="1">
    <location>
        <begin position="40"/>
        <end position="60"/>
    </location>
</feature>
<feature type="transmembrane region" description="Helical" evidence="1">
    <location>
        <begin position="80"/>
        <end position="100"/>
    </location>
</feature>
<feature type="transmembrane region" description="Helical" evidence="1">
    <location>
        <begin position="117"/>
        <end position="137"/>
    </location>
</feature>
<feature type="transmembrane region" description="Helical" evidence="1">
    <location>
        <begin position="166"/>
        <end position="186"/>
    </location>
</feature>
<feature type="transmembrane region" description="Helical" evidence="1">
    <location>
        <begin position="208"/>
        <end position="228"/>
    </location>
</feature>
<feature type="transmembrane region" description="Helical" evidence="1">
    <location>
        <begin position="246"/>
        <end position="266"/>
    </location>
</feature>
<feature type="transmembrane region" description="Helical" evidence="1">
    <location>
        <begin position="276"/>
        <end position="296"/>
    </location>
</feature>
<feature type="transmembrane region" description="Helical" evidence="1">
    <location>
        <begin position="304"/>
        <end position="324"/>
    </location>
</feature>
<feature type="transmembrane region" description="Helical" evidence="1">
    <location>
        <begin position="330"/>
        <end position="350"/>
    </location>
</feature>
<feature type="transmembrane region" description="Helical" evidence="1">
    <location>
        <begin position="374"/>
        <end position="394"/>
    </location>
</feature>
<feature type="transmembrane region" description="Helical" evidence="1">
    <location>
        <begin position="409"/>
        <end position="431"/>
    </location>
</feature>
<feature type="transmembrane region" description="Helical" evidence="1">
    <location>
        <begin position="452"/>
        <end position="472"/>
    </location>
</feature>
<evidence type="ECO:0000255" key="1">
    <source>
        <dbReference type="HAMAP-Rule" id="MF_00445"/>
    </source>
</evidence>
<protein>
    <recommendedName>
        <fullName evidence="1">NADH-quinone oxidoreductase subunit N</fullName>
        <ecNumber evidence="1">7.1.1.-</ecNumber>
    </recommendedName>
    <alternativeName>
        <fullName evidence="1">NADH dehydrogenase I subunit N</fullName>
    </alternativeName>
    <alternativeName>
        <fullName evidence="1">NDH-1 subunit N</fullName>
    </alternativeName>
</protein>
<keyword id="KW-0997">Cell inner membrane</keyword>
<keyword id="KW-1003">Cell membrane</keyword>
<keyword id="KW-0472">Membrane</keyword>
<keyword id="KW-0520">NAD</keyword>
<keyword id="KW-0874">Quinone</keyword>
<keyword id="KW-1185">Reference proteome</keyword>
<keyword id="KW-1278">Translocase</keyword>
<keyword id="KW-0812">Transmembrane</keyword>
<keyword id="KW-1133">Transmembrane helix</keyword>
<keyword id="KW-0813">Transport</keyword>
<keyword id="KW-0830">Ubiquinone</keyword>
<organism>
    <name type="scientific">Protochlamydia amoebophila (strain UWE25)</name>
    <dbReference type="NCBI Taxonomy" id="264201"/>
    <lineage>
        <taxon>Bacteria</taxon>
        <taxon>Pseudomonadati</taxon>
        <taxon>Chlamydiota</taxon>
        <taxon>Chlamydiia</taxon>
        <taxon>Parachlamydiales</taxon>
        <taxon>Parachlamydiaceae</taxon>
        <taxon>Candidatus Protochlamydia</taxon>
    </lineage>
</organism>
<proteinExistence type="inferred from homology"/>
<gene>
    <name evidence="1" type="primary">nuoN</name>
    <name type="ordered locus">pc0572</name>
</gene>
<dbReference type="EC" id="7.1.1.-" evidence="1"/>
<dbReference type="EMBL" id="BX908798">
    <property type="protein sequence ID" value="CAF23296.1"/>
    <property type="molecule type" value="Genomic_DNA"/>
</dbReference>
<dbReference type="RefSeq" id="WP_011175122.1">
    <property type="nucleotide sequence ID" value="NC_005861.2"/>
</dbReference>
<dbReference type="SMR" id="Q6MDQ3"/>
<dbReference type="STRING" id="264201.pc0572"/>
<dbReference type="KEGG" id="pcu:PC_RS02735"/>
<dbReference type="eggNOG" id="COG1007">
    <property type="taxonomic scope" value="Bacteria"/>
</dbReference>
<dbReference type="HOGENOM" id="CLU_007100_1_5_0"/>
<dbReference type="OrthoDB" id="9807568at2"/>
<dbReference type="Proteomes" id="UP000000529">
    <property type="component" value="Chromosome"/>
</dbReference>
<dbReference type="GO" id="GO:0005886">
    <property type="term" value="C:plasma membrane"/>
    <property type="evidence" value="ECO:0007669"/>
    <property type="project" value="UniProtKB-SubCell"/>
</dbReference>
<dbReference type="GO" id="GO:0008137">
    <property type="term" value="F:NADH dehydrogenase (ubiquinone) activity"/>
    <property type="evidence" value="ECO:0007669"/>
    <property type="project" value="InterPro"/>
</dbReference>
<dbReference type="GO" id="GO:0050136">
    <property type="term" value="F:NADH:ubiquinone reductase (non-electrogenic) activity"/>
    <property type="evidence" value="ECO:0007669"/>
    <property type="project" value="UniProtKB-UniRule"/>
</dbReference>
<dbReference type="GO" id="GO:0048038">
    <property type="term" value="F:quinone binding"/>
    <property type="evidence" value="ECO:0007669"/>
    <property type="project" value="UniProtKB-KW"/>
</dbReference>
<dbReference type="GO" id="GO:0042773">
    <property type="term" value="P:ATP synthesis coupled electron transport"/>
    <property type="evidence" value="ECO:0007669"/>
    <property type="project" value="InterPro"/>
</dbReference>
<dbReference type="HAMAP" id="MF_00445">
    <property type="entry name" value="NDH1_NuoN_1"/>
    <property type="match status" value="1"/>
</dbReference>
<dbReference type="InterPro" id="IPR010096">
    <property type="entry name" value="NADH-Q_OxRdtase_suN/2"/>
</dbReference>
<dbReference type="InterPro" id="IPR001750">
    <property type="entry name" value="ND/Mrp_TM"/>
</dbReference>
<dbReference type="NCBIfam" id="TIGR01770">
    <property type="entry name" value="NDH_I_N"/>
    <property type="match status" value="1"/>
</dbReference>
<dbReference type="PANTHER" id="PTHR22773">
    <property type="entry name" value="NADH DEHYDROGENASE"/>
    <property type="match status" value="1"/>
</dbReference>
<dbReference type="Pfam" id="PF00361">
    <property type="entry name" value="Proton_antipo_M"/>
    <property type="match status" value="1"/>
</dbReference>
<dbReference type="PRINTS" id="PR01434">
    <property type="entry name" value="NADHDHGNASE5"/>
</dbReference>
<accession>Q6MDQ3</accession>
<reference key="1">
    <citation type="journal article" date="2004" name="Science">
        <title>Illuminating the evolutionary history of chlamydiae.</title>
        <authorList>
            <person name="Horn M."/>
            <person name="Collingro A."/>
            <person name="Schmitz-Esser S."/>
            <person name="Beier C.L."/>
            <person name="Purkhold U."/>
            <person name="Fartmann B."/>
            <person name="Brandt P."/>
            <person name="Nyakatura G.J."/>
            <person name="Droege M."/>
            <person name="Frishman D."/>
            <person name="Rattei T."/>
            <person name="Mewes H.-W."/>
            <person name="Wagner M."/>
        </authorList>
    </citation>
    <scope>NUCLEOTIDE SEQUENCE [LARGE SCALE GENOMIC DNA]</scope>
    <source>
        <strain>UWE25</strain>
    </source>
</reference>
<sequence>MNPTLTLTDFISIGPLLIVLMTALIIILIESFSENCSKKWSSLISIGGLTLSIFAVWGGISSNHSSLLNPWIHFDTLARFFTVFFLVIGIGASLLATAFFQRFKASHGEYFFLLQSAVFGLILIGAAADLLTLFLGIETLSISLYVLCGYMKKWEISHESSFKYFLMGSIVAGFLLYGIALVYGAIGTTRLDVLLSSYQTISLTTEKVLFFSGIAMITLGLAFKAALVPFHTWSPDVYAGASNPVTAFMAVGTKVGVFAAFVRLFFEALPQFDAAWNQVIDTLVYATLIYANFVALKQIQLRRFFAYSSISHAGFLMIPVVIGNQEALSALTFYLVIYAIATFGCFAVLAYLDQNQEGVHFSDLHGLFSRSPWLASLLSICLLTLAGIPPTAGFLAKFYVFKVAFQAGYYGLVIVGLLTTILSSYYYLRIIGILFSESKNDEKLPYSMPAAIVGTTSFIAIIILSFYPAPFLKVLSHLSN</sequence>
<comment type="function">
    <text evidence="1">NDH-1 shuttles electrons from NADH, via FMN and iron-sulfur (Fe-S) centers, to quinones in the respiratory chain. The immediate electron acceptor for the enzyme in this species is believed to be ubiquinone. Couples the redox reaction to proton translocation (for every two electrons transferred, four hydrogen ions are translocated across the cytoplasmic membrane), and thus conserves the redox energy in a proton gradient.</text>
</comment>
<comment type="catalytic activity">
    <reaction evidence="1">
        <text>a quinone + NADH + 5 H(+)(in) = a quinol + NAD(+) + 4 H(+)(out)</text>
        <dbReference type="Rhea" id="RHEA:57888"/>
        <dbReference type="ChEBI" id="CHEBI:15378"/>
        <dbReference type="ChEBI" id="CHEBI:24646"/>
        <dbReference type="ChEBI" id="CHEBI:57540"/>
        <dbReference type="ChEBI" id="CHEBI:57945"/>
        <dbReference type="ChEBI" id="CHEBI:132124"/>
    </reaction>
</comment>
<comment type="subunit">
    <text evidence="1">NDH-1 is composed of 14 different subunits. Subunits NuoA, H, J, K, L, M, N constitute the membrane sector of the complex.</text>
</comment>
<comment type="subcellular location">
    <subcellularLocation>
        <location evidence="1">Cell inner membrane</location>
        <topology evidence="1">Multi-pass membrane protein</topology>
    </subcellularLocation>
</comment>
<comment type="similarity">
    <text evidence="1">Belongs to the complex I subunit 2 family.</text>
</comment>